<reference key="1">
    <citation type="journal article" date="2009" name="J. Bacteriol.">
        <title>Complete genome sequence and comparative genome analysis of enteropathogenic Escherichia coli O127:H6 strain E2348/69.</title>
        <authorList>
            <person name="Iguchi A."/>
            <person name="Thomson N.R."/>
            <person name="Ogura Y."/>
            <person name="Saunders D."/>
            <person name="Ooka T."/>
            <person name="Henderson I.R."/>
            <person name="Harris D."/>
            <person name="Asadulghani M."/>
            <person name="Kurokawa K."/>
            <person name="Dean P."/>
            <person name="Kenny B."/>
            <person name="Quail M.A."/>
            <person name="Thurston S."/>
            <person name="Dougan G."/>
            <person name="Hayashi T."/>
            <person name="Parkhill J."/>
            <person name="Frankel G."/>
        </authorList>
    </citation>
    <scope>NUCLEOTIDE SEQUENCE [LARGE SCALE GENOMIC DNA]</scope>
    <source>
        <strain>E2348/69 / EPEC</strain>
    </source>
</reference>
<evidence type="ECO:0000255" key="1">
    <source>
        <dbReference type="HAMAP-Rule" id="MF_00199"/>
    </source>
</evidence>
<gene>
    <name evidence="1" type="primary">apaH</name>
    <name type="ordered locus">E2348C_0052</name>
</gene>
<sequence>MATYLIGDVHGCYDELIALLHKVEFTPGKDTLWLTGDLVARGPGSLDVLRYVKSLGDSVRLVLGNHDLHLLAVFAGISRNKPKDRLTPLLEAPDADELLNWLRRQPLLQIDEEKKLVMAHAGITPQWDLQTAKECARDVEAVLSSDSYPFFLDAMYGDMPNNWSPELRGLGRLRFITNAFTRMRFCFPNGQLDMYSKESPEEAPAPLKPWFAIPGPVAEEYNIAFGHWASLEGKGTPEGIYALDTGCCWGGTLTCLRWEDKQYFVQPSNRHKDMGEGEAVAS</sequence>
<proteinExistence type="inferred from homology"/>
<keyword id="KW-0378">Hydrolase</keyword>
<keyword id="KW-1185">Reference proteome</keyword>
<comment type="function">
    <text evidence="1">Hydrolyzes diadenosine 5',5'''-P1,P4-tetraphosphate to yield ADP.</text>
</comment>
<comment type="catalytic activity">
    <reaction evidence="1">
        <text>P(1),P(4)-bis(5'-adenosyl) tetraphosphate + H2O = 2 ADP + 2 H(+)</text>
        <dbReference type="Rhea" id="RHEA:24252"/>
        <dbReference type="ChEBI" id="CHEBI:15377"/>
        <dbReference type="ChEBI" id="CHEBI:15378"/>
        <dbReference type="ChEBI" id="CHEBI:58141"/>
        <dbReference type="ChEBI" id="CHEBI:456216"/>
        <dbReference type="EC" id="3.6.1.41"/>
    </reaction>
</comment>
<comment type="similarity">
    <text evidence="1">Belongs to the Ap4A hydrolase family.</text>
</comment>
<accession>B7UI97</accession>
<protein>
    <recommendedName>
        <fullName evidence="1">Bis(5'-nucleosyl)-tetraphosphatase, symmetrical</fullName>
        <ecNumber evidence="1">3.6.1.41</ecNumber>
    </recommendedName>
    <alternativeName>
        <fullName evidence="1">Ap4A hydrolase</fullName>
    </alternativeName>
    <alternativeName>
        <fullName evidence="1">Diadenosine 5',5'''-P1,P4-tetraphosphate pyrophosphohydrolase</fullName>
    </alternativeName>
    <alternativeName>
        <fullName evidence="1">Diadenosine tetraphosphatase</fullName>
    </alternativeName>
</protein>
<name>APAH_ECO27</name>
<organism>
    <name type="scientific">Escherichia coli O127:H6 (strain E2348/69 / EPEC)</name>
    <dbReference type="NCBI Taxonomy" id="574521"/>
    <lineage>
        <taxon>Bacteria</taxon>
        <taxon>Pseudomonadati</taxon>
        <taxon>Pseudomonadota</taxon>
        <taxon>Gammaproteobacteria</taxon>
        <taxon>Enterobacterales</taxon>
        <taxon>Enterobacteriaceae</taxon>
        <taxon>Escherichia</taxon>
    </lineage>
</organism>
<feature type="chain" id="PRO_1000124450" description="Bis(5'-nucleosyl)-tetraphosphatase, symmetrical">
    <location>
        <begin position="1"/>
        <end position="282"/>
    </location>
</feature>
<dbReference type="EC" id="3.6.1.41" evidence="1"/>
<dbReference type="EMBL" id="FM180568">
    <property type="protein sequence ID" value="CAS07600.1"/>
    <property type="molecule type" value="Genomic_DNA"/>
</dbReference>
<dbReference type="RefSeq" id="WP_000257182.1">
    <property type="nucleotide sequence ID" value="NC_011601.1"/>
</dbReference>
<dbReference type="SMR" id="B7UI97"/>
<dbReference type="KEGG" id="ecg:E2348C_0052"/>
<dbReference type="HOGENOM" id="CLU_056184_2_0_6"/>
<dbReference type="Proteomes" id="UP000008205">
    <property type="component" value="Chromosome"/>
</dbReference>
<dbReference type="GO" id="GO:0008803">
    <property type="term" value="F:bis(5'-nucleosyl)-tetraphosphatase (symmetrical) activity"/>
    <property type="evidence" value="ECO:0007669"/>
    <property type="project" value="UniProtKB-UniRule"/>
</dbReference>
<dbReference type="CDD" id="cd07422">
    <property type="entry name" value="MPP_ApaH"/>
    <property type="match status" value="1"/>
</dbReference>
<dbReference type="FunFam" id="3.60.21.10:FF:000013">
    <property type="entry name" value="Bis(5'-nucleosyl)-tetraphosphatase, symmetrical"/>
    <property type="match status" value="1"/>
</dbReference>
<dbReference type="Gene3D" id="3.60.21.10">
    <property type="match status" value="1"/>
</dbReference>
<dbReference type="HAMAP" id="MF_00199">
    <property type="entry name" value="ApaH"/>
    <property type="match status" value="1"/>
</dbReference>
<dbReference type="InterPro" id="IPR004617">
    <property type="entry name" value="ApaH"/>
</dbReference>
<dbReference type="InterPro" id="IPR004843">
    <property type="entry name" value="Calcineurin-like_PHP_ApaH"/>
</dbReference>
<dbReference type="InterPro" id="IPR029052">
    <property type="entry name" value="Metallo-depent_PP-like"/>
</dbReference>
<dbReference type="NCBIfam" id="TIGR00668">
    <property type="entry name" value="apaH"/>
    <property type="match status" value="1"/>
</dbReference>
<dbReference type="NCBIfam" id="NF001204">
    <property type="entry name" value="PRK00166.1"/>
    <property type="match status" value="1"/>
</dbReference>
<dbReference type="PANTHER" id="PTHR40942">
    <property type="match status" value="1"/>
</dbReference>
<dbReference type="PANTHER" id="PTHR40942:SF4">
    <property type="entry name" value="CYTOCHROME C5"/>
    <property type="match status" value="1"/>
</dbReference>
<dbReference type="Pfam" id="PF00149">
    <property type="entry name" value="Metallophos"/>
    <property type="match status" value="1"/>
</dbReference>
<dbReference type="PIRSF" id="PIRSF000903">
    <property type="entry name" value="B5n-ttraPtase_sm"/>
    <property type="match status" value="1"/>
</dbReference>
<dbReference type="SUPFAM" id="SSF56300">
    <property type="entry name" value="Metallo-dependent phosphatases"/>
    <property type="match status" value="1"/>
</dbReference>